<dbReference type="EC" id="6.3.2.1" evidence="1"/>
<dbReference type="EMBL" id="AP008230">
    <property type="protein sequence ID" value="BAE82000.1"/>
    <property type="molecule type" value="Genomic_DNA"/>
</dbReference>
<dbReference type="RefSeq" id="WP_011458948.1">
    <property type="nucleotide sequence ID" value="NC_007907.1"/>
</dbReference>
<dbReference type="SMR" id="Q251P2"/>
<dbReference type="STRING" id="138119.DSY0211"/>
<dbReference type="KEGG" id="dsy:DSY0211"/>
<dbReference type="eggNOG" id="COG0414">
    <property type="taxonomic scope" value="Bacteria"/>
</dbReference>
<dbReference type="HOGENOM" id="CLU_047148_0_0_9"/>
<dbReference type="UniPathway" id="UPA00028">
    <property type="reaction ID" value="UER00005"/>
</dbReference>
<dbReference type="Proteomes" id="UP000001946">
    <property type="component" value="Chromosome"/>
</dbReference>
<dbReference type="GO" id="GO:0005829">
    <property type="term" value="C:cytosol"/>
    <property type="evidence" value="ECO:0007669"/>
    <property type="project" value="TreeGrafter"/>
</dbReference>
<dbReference type="GO" id="GO:0005524">
    <property type="term" value="F:ATP binding"/>
    <property type="evidence" value="ECO:0007669"/>
    <property type="project" value="UniProtKB-KW"/>
</dbReference>
<dbReference type="GO" id="GO:0004592">
    <property type="term" value="F:pantoate-beta-alanine ligase activity"/>
    <property type="evidence" value="ECO:0007669"/>
    <property type="project" value="UniProtKB-UniRule"/>
</dbReference>
<dbReference type="GO" id="GO:0015940">
    <property type="term" value="P:pantothenate biosynthetic process"/>
    <property type="evidence" value="ECO:0007669"/>
    <property type="project" value="UniProtKB-UniRule"/>
</dbReference>
<dbReference type="CDD" id="cd00560">
    <property type="entry name" value="PanC"/>
    <property type="match status" value="1"/>
</dbReference>
<dbReference type="FunFam" id="3.30.1300.10:FF:000001">
    <property type="entry name" value="Pantothenate synthetase"/>
    <property type="match status" value="1"/>
</dbReference>
<dbReference type="FunFam" id="3.40.50.620:FF:000013">
    <property type="entry name" value="Pantothenate synthetase"/>
    <property type="match status" value="1"/>
</dbReference>
<dbReference type="Gene3D" id="3.40.50.620">
    <property type="entry name" value="HUPs"/>
    <property type="match status" value="1"/>
</dbReference>
<dbReference type="Gene3D" id="3.30.1300.10">
    <property type="entry name" value="Pantoate-beta-alanine ligase, C-terminal domain"/>
    <property type="match status" value="1"/>
</dbReference>
<dbReference type="HAMAP" id="MF_00158">
    <property type="entry name" value="PanC"/>
    <property type="match status" value="1"/>
</dbReference>
<dbReference type="InterPro" id="IPR004821">
    <property type="entry name" value="Cyt_trans-like"/>
</dbReference>
<dbReference type="InterPro" id="IPR003721">
    <property type="entry name" value="Pantoate_ligase"/>
</dbReference>
<dbReference type="InterPro" id="IPR042176">
    <property type="entry name" value="Pantoate_ligase_C"/>
</dbReference>
<dbReference type="InterPro" id="IPR014729">
    <property type="entry name" value="Rossmann-like_a/b/a_fold"/>
</dbReference>
<dbReference type="NCBIfam" id="TIGR00125">
    <property type="entry name" value="cyt_tran_rel"/>
    <property type="match status" value="1"/>
</dbReference>
<dbReference type="NCBIfam" id="TIGR00018">
    <property type="entry name" value="panC"/>
    <property type="match status" value="1"/>
</dbReference>
<dbReference type="PANTHER" id="PTHR21299">
    <property type="entry name" value="CYTIDYLATE KINASE/PANTOATE-BETA-ALANINE LIGASE"/>
    <property type="match status" value="1"/>
</dbReference>
<dbReference type="PANTHER" id="PTHR21299:SF1">
    <property type="entry name" value="PANTOATE--BETA-ALANINE LIGASE"/>
    <property type="match status" value="1"/>
</dbReference>
<dbReference type="Pfam" id="PF02569">
    <property type="entry name" value="Pantoate_ligase"/>
    <property type="match status" value="1"/>
</dbReference>
<dbReference type="SUPFAM" id="SSF52374">
    <property type="entry name" value="Nucleotidylyl transferase"/>
    <property type="match status" value="1"/>
</dbReference>
<name>PANC_DESHY</name>
<proteinExistence type="inferred from homology"/>
<reference key="1">
    <citation type="journal article" date="2006" name="J. Bacteriol.">
        <title>Complete genome sequence of the dehalorespiring bacterium Desulfitobacterium hafniense Y51 and comparison with Dehalococcoides ethenogenes 195.</title>
        <authorList>
            <person name="Nonaka H."/>
            <person name="Keresztes G."/>
            <person name="Shinoda Y."/>
            <person name="Ikenaga Y."/>
            <person name="Abe M."/>
            <person name="Naito K."/>
            <person name="Inatomi K."/>
            <person name="Furukawa K."/>
            <person name="Inui M."/>
            <person name="Yukawa H."/>
        </authorList>
    </citation>
    <scope>NUCLEOTIDE SEQUENCE [LARGE SCALE GENOMIC DNA]</scope>
    <source>
        <strain>Y51</strain>
    </source>
</reference>
<keyword id="KW-0067">ATP-binding</keyword>
<keyword id="KW-0963">Cytoplasm</keyword>
<keyword id="KW-0436">Ligase</keyword>
<keyword id="KW-0547">Nucleotide-binding</keyword>
<keyword id="KW-0566">Pantothenate biosynthesis</keyword>
<keyword id="KW-1185">Reference proteome</keyword>
<feature type="chain" id="PRO_0000305438" description="Pantothenate synthetase">
    <location>
        <begin position="1"/>
        <end position="282"/>
    </location>
</feature>
<feature type="active site" description="Proton donor" evidence="1">
    <location>
        <position position="37"/>
    </location>
</feature>
<feature type="binding site" evidence="1">
    <location>
        <begin position="30"/>
        <end position="37"/>
    </location>
    <ligand>
        <name>ATP</name>
        <dbReference type="ChEBI" id="CHEBI:30616"/>
    </ligand>
</feature>
<feature type="binding site" evidence="1">
    <location>
        <position position="61"/>
    </location>
    <ligand>
        <name>(R)-pantoate</name>
        <dbReference type="ChEBI" id="CHEBI:15980"/>
    </ligand>
</feature>
<feature type="binding site" evidence="1">
    <location>
        <position position="61"/>
    </location>
    <ligand>
        <name>beta-alanine</name>
        <dbReference type="ChEBI" id="CHEBI:57966"/>
    </ligand>
</feature>
<feature type="binding site" evidence="1">
    <location>
        <begin position="147"/>
        <end position="150"/>
    </location>
    <ligand>
        <name>ATP</name>
        <dbReference type="ChEBI" id="CHEBI:30616"/>
    </ligand>
</feature>
<feature type="binding site" evidence="1">
    <location>
        <position position="153"/>
    </location>
    <ligand>
        <name>(R)-pantoate</name>
        <dbReference type="ChEBI" id="CHEBI:15980"/>
    </ligand>
</feature>
<feature type="binding site" evidence="1">
    <location>
        <position position="176"/>
    </location>
    <ligand>
        <name>ATP</name>
        <dbReference type="ChEBI" id="CHEBI:30616"/>
    </ligand>
</feature>
<feature type="binding site" evidence="1">
    <location>
        <begin position="184"/>
        <end position="187"/>
    </location>
    <ligand>
        <name>ATP</name>
        <dbReference type="ChEBI" id="CHEBI:30616"/>
    </ligand>
</feature>
<comment type="function">
    <text evidence="1">Catalyzes the condensation of pantoate with beta-alanine in an ATP-dependent reaction via a pantoyl-adenylate intermediate.</text>
</comment>
<comment type="catalytic activity">
    <reaction evidence="1">
        <text>(R)-pantoate + beta-alanine + ATP = (R)-pantothenate + AMP + diphosphate + H(+)</text>
        <dbReference type="Rhea" id="RHEA:10912"/>
        <dbReference type="ChEBI" id="CHEBI:15378"/>
        <dbReference type="ChEBI" id="CHEBI:15980"/>
        <dbReference type="ChEBI" id="CHEBI:29032"/>
        <dbReference type="ChEBI" id="CHEBI:30616"/>
        <dbReference type="ChEBI" id="CHEBI:33019"/>
        <dbReference type="ChEBI" id="CHEBI:57966"/>
        <dbReference type="ChEBI" id="CHEBI:456215"/>
        <dbReference type="EC" id="6.3.2.1"/>
    </reaction>
</comment>
<comment type="pathway">
    <text evidence="1">Cofactor biosynthesis; (R)-pantothenate biosynthesis; (R)-pantothenate from (R)-pantoate and beta-alanine: step 1/1.</text>
</comment>
<comment type="subunit">
    <text evidence="1">Homodimer.</text>
</comment>
<comment type="subcellular location">
    <subcellularLocation>
        <location evidence="1">Cytoplasm</location>
    </subcellularLocation>
</comment>
<comment type="miscellaneous">
    <text evidence="1">The reaction proceeds by a bi uni uni bi ping pong mechanism.</text>
</comment>
<comment type="similarity">
    <text evidence="1">Belongs to the pantothenate synthetase family.</text>
</comment>
<evidence type="ECO:0000255" key="1">
    <source>
        <dbReference type="HAMAP-Rule" id="MF_00158"/>
    </source>
</evidence>
<organism>
    <name type="scientific">Desulfitobacterium hafniense (strain Y51)</name>
    <dbReference type="NCBI Taxonomy" id="138119"/>
    <lineage>
        <taxon>Bacteria</taxon>
        <taxon>Bacillati</taxon>
        <taxon>Bacillota</taxon>
        <taxon>Clostridia</taxon>
        <taxon>Eubacteriales</taxon>
        <taxon>Desulfitobacteriaceae</taxon>
        <taxon>Desulfitobacterium</taxon>
    </lineage>
</organism>
<sequence length="282" mass="31860">MIICKKISAVRDIVKEQRGQGRSIALVPTMGYLHEGHLTLVEEARKSGAFVVMSIFVNPLQFGPNEDFARYPRDLERDAKKAEGAGVDLIFNPEVEEMYPAKNLTHVEVDELGDSLCGASRPGHFRGVTTVVSKLFHIVQPDRAYFGQKDYQQYLIICQMVKDLNFPIEVIGVPIVREEDGLALSSRNIYLSPEQRAEALVLQRSLGEAENWFRQGERSALSIEERIKELIRNESSGEIDYVEIRSAENLHRVEQIEGKIFIALAVRFGSTRLIDNKVLEGM</sequence>
<accession>Q251P2</accession>
<gene>
    <name evidence="1" type="primary">panC</name>
    <name type="ordered locus">DSY0211</name>
</gene>
<protein>
    <recommendedName>
        <fullName evidence="1">Pantothenate synthetase</fullName>
        <shortName evidence="1">PS</shortName>
        <ecNumber evidence="1">6.3.2.1</ecNumber>
    </recommendedName>
    <alternativeName>
        <fullName evidence="1">Pantoate--beta-alanine ligase</fullName>
    </alternativeName>
    <alternativeName>
        <fullName evidence="1">Pantoate-activating enzyme</fullName>
    </alternativeName>
</protein>